<name>FPG_BRUA2</name>
<comment type="function">
    <text evidence="2">Involved in base excision repair of DNA damaged by oxidation or by mutagenic agents. Acts as a DNA glycosylase that recognizes and removes damaged bases. Has a preference for oxidized purines, such as 7,8-dihydro-8-oxoguanine (8-oxoG). Has AP (apurinic/apyrimidinic) lyase activity and introduces nicks in the DNA strand. Cleaves the DNA backbone by beta-delta elimination to generate a single-strand break at the site of the removed base with both 3'- and 5'-phosphates.</text>
</comment>
<comment type="catalytic activity">
    <reaction evidence="2">
        <text>Hydrolysis of DNA containing ring-opened 7-methylguanine residues, releasing 2,6-diamino-4-hydroxy-5-(N-methyl)formamidopyrimidine.</text>
        <dbReference type="EC" id="3.2.2.23"/>
    </reaction>
</comment>
<comment type="catalytic activity">
    <reaction evidence="2">
        <text>2'-deoxyribonucleotide-(2'-deoxyribose 5'-phosphate)-2'-deoxyribonucleotide-DNA = a 3'-end 2'-deoxyribonucleotide-(2,3-dehydro-2,3-deoxyribose 5'-phosphate)-DNA + a 5'-end 5'-phospho-2'-deoxyribonucleoside-DNA + H(+)</text>
        <dbReference type="Rhea" id="RHEA:66592"/>
        <dbReference type="Rhea" id="RHEA-COMP:13180"/>
        <dbReference type="Rhea" id="RHEA-COMP:16897"/>
        <dbReference type="Rhea" id="RHEA-COMP:17067"/>
        <dbReference type="ChEBI" id="CHEBI:15378"/>
        <dbReference type="ChEBI" id="CHEBI:136412"/>
        <dbReference type="ChEBI" id="CHEBI:157695"/>
        <dbReference type="ChEBI" id="CHEBI:167181"/>
        <dbReference type="EC" id="4.2.99.18"/>
    </reaction>
</comment>
<comment type="cofactor">
    <cofactor evidence="2">
        <name>Zn(2+)</name>
        <dbReference type="ChEBI" id="CHEBI:29105"/>
    </cofactor>
    <text evidence="2">Binds 1 zinc ion per subunit.</text>
</comment>
<comment type="subunit">
    <text evidence="2">Monomer.</text>
</comment>
<comment type="similarity">
    <text evidence="2">Belongs to the FPG family.</text>
</comment>
<protein>
    <recommendedName>
        <fullName evidence="2">Formamidopyrimidine-DNA glycosylase</fullName>
        <shortName evidence="2">Fapy-DNA glycosylase</shortName>
        <ecNumber evidence="2">3.2.2.23</ecNumber>
    </recommendedName>
    <alternativeName>
        <fullName evidence="2">DNA-(apurinic or apyrimidinic site) lyase MutM</fullName>
        <shortName evidence="2">AP lyase MutM</shortName>
        <ecNumber evidence="2">4.2.99.18</ecNumber>
    </alternativeName>
</protein>
<accession>Q2YQP8</accession>
<evidence type="ECO:0000250" key="1"/>
<evidence type="ECO:0000255" key="2">
    <source>
        <dbReference type="HAMAP-Rule" id="MF_00103"/>
    </source>
</evidence>
<sequence>MPELPEVETVRRGLQPFMEGATVVRVEQNRPDLRFAFPENFAERLSGRRIEALGRRAKYLTVHLDDGLSIISHLGMSGSFRIEAEDAQGLPGGFHHERSKNSLHDHVVFHLMRPDGASARIIYNDPRRFGFMLFAEKGALEEHPLLKDLGVEPTGNLLSGEVLAALFKGRRTPLKAALLDQRLIAGLGNIYVCEALWRPGLSPMRAAGSVAGEMDVMERLAGAIRSVIAQAIAAGGSSLKDYIQADGALGYFQHSFSVYGREGKPCRNPACGGTVERVVQSGRSTFFCASCQT</sequence>
<keyword id="KW-0227">DNA damage</keyword>
<keyword id="KW-0234">DNA repair</keyword>
<keyword id="KW-0238">DNA-binding</keyword>
<keyword id="KW-0326">Glycosidase</keyword>
<keyword id="KW-0378">Hydrolase</keyword>
<keyword id="KW-0456">Lyase</keyword>
<keyword id="KW-0479">Metal-binding</keyword>
<keyword id="KW-0511">Multifunctional enzyme</keyword>
<keyword id="KW-1185">Reference proteome</keyword>
<keyword id="KW-0862">Zinc</keyword>
<keyword id="KW-0863">Zinc-finger</keyword>
<feature type="initiator methionine" description="Removed" evidence="1">
    <location>
        <position position="1"/>
    </location>
</feature>
<feature type="chain" id="PRO_0000228420" description="Formamidopyrimidine-DNA glycosylase">
    <location>
        <begin position="2"/>
        <end position="293"/>
    </location>
</feature>
<feature type="zinc finger region" description="FPG-type" evidence="2">
    <location>
        <begin position="257"/>
        <end position="293"/>
    </location>
</feature>
<feature type="active site" description="Schiff-base intermediate with DNA" evidence="2">
    <location>
        <position position="2"/>
    </location>
</feature>
<feature type="active site" description="Proton donor" evidence="2">
    <location>
        <position position="3"/>
    </location>
</feature>
<feature type="active site" description="Proton donor; for beta-elimination activity" evidence="2">
    <location>
        <position position="58"/>
    </location>
</feature>
<feature type="active site" description="Proton donor; for delta-elimination activity" evidence="2">
    <location>
        <position position="283"/>
    </location>
</feature>
<feature type="binding site" evidence="2">
    <location>
        <position position="104"/>
    </location>
    <ligand>
        <name>DNA</name>
        <dbReference type="ChEBI" id="CHEBI:16991"/>
    </ligand>
</feature>
<feature type="binding site" evidence="2">
    <location>
        <position position="127"/>
    </location>
    <ligand>
        <name>DNA</name>
        <dbReference type="ChEBI" id="CHEBI:16991"/>
    </ligand>
</feature>
<feature type="binding site" evidence="2">
    <location>
        <position position="170"/>
    </location>
    <ligand>
        <name>DNA</name>
        <dbReference type="ChEBI" id="CHEBI:16991"/>
    </ligand>
</feature>
<proteinExistence type="inferred from homology"/>
<gene>
    <name evidence="2" type="primary">mutM</name>
    <name evidence="2" type="synonym">fpg</name>
    <name type="ordered locus">BAB1_2184</name>
</gene>
<organism>
    <name type="scientific">Brucella abortus (strain 2308)</name>
    <dbReference type="NCBI Taxonomy" id="359391"/>
    <lineage>
        <taxon>Bacteria</taxon>
        <taxon>Pseudomonadati</taxon>
        <taxon>Pseudomonadota</taxon>
        <taxon>Alphaproteobacteria</taxon>
        <taxon>Hyphomicrobiales</taxon>
        <taxon>Brucellaceae</taxon>
        <taxon>Brucella/Ochrobactrum group</taxon>
        <taxon>Brucella</taxon>
    </lineage>
</organism>
<dbReference type="EC" id="3.2.2.23" evidence="2"/>
<dbReference type="EC" id="4.2.99.18" evidence="2"/>
<dbReference type="EMBL" id="AM040264">
    <property type="protein sequence ID" value="CAJ12140.1"/>
    <property type="molecule type" value="Genomic_DNA"/>
</dbReference>
<dbReference type="RefSeq" id="WP_002965245.1">
    <property type="nucleotide sequence ID" value="NZ_KN046823.1"/>
</dbReference>
<dbReference type="SMR" id="Q2YQP8"/>
<dbReference type="STRING" id="359391.BAB1_2184"/>
<dbReference type="GeneID" id="93017516"/>
<dbReference type="KEGG" id="bmf:BAB1_2184"/>
<dbReference type="PATRIC" id="fig|359391.11.peg.1421"/>
<dbReference type="HOGENOM" id="CLU_038423_1_1_5"/>
<dbReference type="PhylomeDB" id="Q2YQP8"/>
<dbReference type="Proteomes" id="UP000002719">
    <property type="component" value="Chromosome I"/>
</dbReference>
<dbReference type="GO" id="GO:0034039">
    <property type="term" value="F:8-oxo-7,8-dihydroguanine DNA N-glycosylase activity"/>
    <property type="evidence" value="ECO:0007669"/>
    <property type="project" value="TreeGrafter"/>
</dbReference>
<dbReference type="GO" id="GO:0140078">
    <property type="term" value="F:class I DNA-(apurinic or apyrimidinic site) endonuclease activity"/>
    <property type="evidence" value="ECO:0007669"/>
    <property type="project" value="UniProtKB-EC"/>
</dbReference>
<dbReference type="GO" id="GO:0003684">
    <property type="term" value="F:damaged DNA binding"/>
    <property type="evidence" value="ECO:0007669"/>
    <property type="project" value="InterPro"/>
</dbReference>
<dbReference type="GO" id="GO:0008270">
    <property type="term" value="F:zinc ion binding"/>
    <property type="evidence" value="ECO:0007669"/>
    <property type="project" value="UniProtKB-UniRule"/>
</dbReference>
<dbReference type="GO" id="GO:0006284">
    <property type="term" value="P:base-excision repair"/>
    <property type="evidence" value="ECO:0007669"/>
    <property type="project" value="InterPro"/>
</dbReference>
<dbReference type="CDD" id="cd08966">
    <property type="entry name" value="EcFpg-like_N"/>
    <property type="match status" value="1"/>
</dbReference>
<dbReference type="FunFam" id="1.10.8.50:FF:000003">
    <property type="entry name" value="Formamidopyrimidine-DNA glycosylase"/>
    <property type="match status" value="1"/>
</dbReference>
<dbReference type="Gene3D" id="1.10.8.50">
    <property type="match status" value="1"/>
</dbReference>
<dbReference type="Gene3D" id="3.20.190.10">
    <property type="entry name" value="MutM-like, N-terminal"/>
    <property type="match status" value="1"/>
</dbReference>
<dbReference type="HAMAP" id="MF_00103">
    <property type="entry name" value="Fapy_DNA_glycosyl"/>
    <property type="match status" value="1"/>
</dbReference>
<dbReference type="InterPro" id="IPR015886">
    <property type="entry name" value="DNA_glyclase/AP_lyase_DNA-bd"/>
</dbReference>
<dbReference type="InterPro" id="IPR015887">
    <property type="entry name" value="DNA_glyclase_Znf_dom_DNA_BS"/>
</dbReference>
<dbReference type="InterPro" id="IPR020629">
    <property type="entry name" value="Formamido-pyr_DNA_Glyclase"/>
</dbReference>
<dbReference type="InterPro" id="IPR012319">
    <property type="entry name" value="FPG_cat"/>
</dbReference>
<dbReference type="InterPro" id="IPR035937">
    <property type="entry name" value="MutM-like_N-ter"/>
</dbReference>
<dbReference type="InterPro" id="IPR010979">
    <property type="entry name" value="Ribosomal_uS13-like_H2TH"/>
</dbReference>
<dbReference type="InterPro" id="IPR000214">
    <property type="entry name" value="Znf_DNA_glyclase/AP_lyase"/>
</dbReference>
<dbReference type="InterPro" id="IPR010663">
    <property type="entry name" value="Znf_FPG/IleRS"/>
</dbReference>
<dbReference type="NCBIfam" id="TIGR00577">
    <property type="entry name" value="fpg"/>
    <property type="match status" value="1"/>
</dbReference>
<dbReference type="NCBIfam" id="NF002211">
    <property type="entry name" value="PRK01103.1"/>
    <property type="match status" value="1"/>
</dbReference>
<dbReference type="PANTHER" id="PTHR22993">
    <property type="entry name" value="FORMAMIDOPYRIMIDINE-DNA GLYCOSYLASE"/>
    <property type="match status" value="1"/>
</dbReference>
<dbReference type="PANTHER" id="PTHR22993:SF9">
    <property type="entry name" value="FORMAMIDOPYRIMIDINE-DNA GLYCOSYLASE"/>
    <property type="match status" value="1"/>
</dbReference>
<dbReference type="Pfam" id="PF01149">
    <property type="entry name" value="Fapy_DNA_glyco"/>
    <property type="match status" value="1"/>
</dbReference>
<dbReference type="Pfam" id="PF06831">
    <property type="entry name" value="H2TH"/>
    <property type="match status" value="1"/>
</dbReference>
<dbReference type="Pfam" id="PF06827">
    <property type="entry name" value="zf-FPG_IleRS"/>
    <property type="match status" value="1"/>
</dbReference>
<dbReference type="SMART" id="SM00898">
    <property type="entry name" value="Fapy_DNA_glyco"/>
    <property type="match status" value="1"/>
</dbReference>
<dbReference type="SMART" id="SM01232">
    <property type="entry name" value="H2TH"/>
    <property type="match status" value="1"/>
</dbReference>
<dbReference type="SUPFAM" id="SSF57716">
    <property type="entry name" value="Glucocorticoid receptor-like (DNA-binding domain)"/>
    <property type="match status" value="1"/>
</dbReference>
<dbReference type="SUPFAM" id="SSF81624">
    <property type="entry name" value="N-terminal domain of MutM-like DNA repair proteins"/>
    <property type="match status" value="1"/>
</dbReference>
<dbReference type="SUPFAM" id="SSF46946">
    <property type="entry name" value="S13-like H2TH domain"/>
    <property type="match status" value="1"/>
</dbReference>
<dbReference type="PROSITE" id="PS51068">
    <property type="entry name" value="FPG_CAT"/>
    <property type="match status" value="1"/>
</dbReference>
<dbReference type="PROSITE" id="PS01242">
    <property type="entry name" value="ZF_FPG_1"/>
    <property type="match status" value="1"/>
</dbReference>
<dbReference type="PROSITE" id="PS51066">
    <property type="entry name" value="ZF_FPG_2"/>
    <property type="match status" value="1"/>
</dbReference>
<reference key="1">
    <citation type="journal article" date="2005" name="Infect. Immun.">
        <title>Whole-genome analyses of speciation events in pathogenic Brucellae.</title>
        <authorList>
            <person name="Chain P.S."/>
            <person name="Comerci D.J."/>
            <person name="Tolmasky M.E."/>
            <person name="Larimer F.W."/>
            <person name="Malfatti S.A."/>
            <person name="Vergez L.M."/>
            <person name="Aguero F."/>
            <person name="Land M.L."/>
            <person name="Ugalde R.A."/>
            <person name="Garcia E."/>
        </authorList>
    </citation>
    <scope>NUCLEOTIDE SEQUENCE [LARGE SCALE GENOMIC DNA]</scope>
    <source>
        <strain>2308</strain>
    </source>
</reference>